<reference key="1">
    <citation type="journal article" date="1995" name="EMBO J.">
        <title>Specific mutations in alpha- and gamma-subunits of F1-ATPase affect mitochondrial genome integrity in the petite-negative yeast Kluyveromyces lactis.</title>
        <authorList>
            <person name="Chen X.J."/>
            <person name="Clark-Walker G.D."/>
        </authorList>
    </citation>
    <scope>NUCLEOTIDE SEQUENCE [GENOMIC DNA]</scope>
    <scope>MUTANTS MGI2-1 AND MGI2-2</scope>
    <source>
        <strain>ATCC 76492 / CBS 2359/152 / CLIB 210</strain>
    </source>
</reference>
<reference key="2">
    <citation type="journal article" date="2004" name="Nature">
        <title>Genome evolution in yeasts.</title>
        <authorList>
            <person name="Dujon B."/>
            <person name="Sherman D."/>
            <person name="Fischer G."/>
            <person name="Durrens P."/>
            <person name="Casaregola S."/>
            <person name="Lafontaine I."/>
            <person name="de Montigny J."/>
            <person name="Marck C."/>
            <person name="Neuveglise C."/>
            <person name="Talla E."/>
            <person name="Goffard N."/>
            <person name="Frangeul L."/>
            <person name="Aigle M."/>
            <person name="Anthouard V."/>
            <person name="Babour A."/>
            <person name="Barbe V."/>
            <person name="Barnay S."/>
            <person name="Blanchin S."/>
            <person name="Beckerich J.-M."/>
            <person name="Beyne E."/>
            <person name="Bleykasten C."/>
            <person name="Boisrame A."/>
            <person name="Boyer J."/>
            <person name="Cattolico L."/>
            <person name="Confanioleri F."/>
            <person name="de Daruvar A."/>
            <person name="Despons L."/>
            <person name="Fabre E."/>
            <person name="Fairhead C."/>
            <person name="Ferry-Dumazet H."/>
            <person name="Groppi A."/>
            <person name="Hantraye F."/>
            <person name="Hennequin C."/>
            <person name="Jauniaux N."/>
            <person name="Joyet P."/>
            <person name="Kachouri R."/>
            <person name="Kerrest A."/>
            <person name="Koszul R."/>
            <person name="Lemaire M."/>
            <person name="Lesur I."/>
            <person name="Ma L."/>
            <person name="Muller H."/>
            <person name="Nicaud J.-M."/>
            <person name="Nikolski M."/>
            <person name="Oztas S."/>
            <person name="Ozier-Kalogeropoulos O."/>
            <person name="Pellenz S."/>
            <person name="Potier S."/>
            <person name="Richard G.-F."/>
            <person name="Straub M.-L."/>
            <person name="Suleau A."/>
            <person name="Swennen D."/>
            <person name="Tekaia F."/>
            <person name="Wesolowski-Louvel M."/>
            <person name="Westhof E."/>
            <person name="Wirth B."/>
            <person name="Zeniou-Meyer M."/>
            <person name="Zivanovic Y."/>
            <person name="Bolotin-Fukuhara M."/>
            <person name="Thierry A."/>
            <person name="Bouchier C."/>
            <person name="Caudron B."/>
            <person name="Scarpelli C."/>
            <person name="Gaillardin C."/>
            <person name="Weissenbach J."/>
            <person name="Wincker P."/>
            <person name="Souciet J.-L."/>
        </authorList>
    </citation>
    <scope>NUCLEOTIDE SEQUENCE [LARGE SCALE GENOMIC DNA]</scope>
    <source>
        <strain>ATCC 8585 / CBS 2359 / DSM 70799 / NBRC 1267 / NRRL Y-1140 / WM37</strain>
    </source>
</reference>
<gene>
    <name type="primary">ATP1</name>
    <name type="synonym">MGI2</name>
    <name type="ordered locus">KLLA0E06644g</name>
</gene>
<protein>
    <recommendedName>
        <fullName>ATP synthase subunit alpha, mitochondrial</fullName>
    </recommendedName>
</protein>
<organism>
    <name type="scientific">Kluyveromyces lactis (strain ATCC 8585 / CBS 2359 / DSM 70799 / NBRC 1267 / NRRL Y-1140 / WM37)</name>
    <name type="common">Yeast</name>
    <name type="synonym">Candida sphaerica</name>
    <dbReference type="NCBI Taxonomy" id="284590"/>
    <lineage>
        <taxon>Eukaryota</taxon>
        <taxon>Fungi</taxon>
        <taxon>Dikarya</taxon>
        <taxon>Ascomycota</taxon>
        <taxon>Saccharomycotina</taxon>
        <taxon>Saccharomycetes</taxon>
        <taxon>Saccharomycetales</taxon>
        <taxon>Saccharomycetaceae</taxon>
        <taxon>Kluyveromyces</taxon>
    </lineage>
</organism>
<sequence length="548" mass="59103">MLSRSAIRSASRSVVAANLVRSMNRVARPALVVAGRRFASAKAQPTEVSSILEERIRGVSEESNLNETGRVLAVGDGIARVFGLNNVQAEELVEFSSGVKGMALNLEPGQVGIVLFGSDRLVKEGEVVKRTGKIVDVGVGPELLGRVVDALGNPIDGKGPINASGRSRAQVKAPGILPRRSVHEPVQTGLKSVDALVPIGRGQRELIIGDRQTGKTAVALDTILNQKRWNNGTDESKKLYCVYVAVGQKRSTVAQLVQTLEQHDALKYSIIVAATASEAAPLQYIAPFTAAAIGEWFRDNGRHALIIYDDLSKQAVAYRQLSLLLRRPPGREAYPGDVFYLHSRLLERAAKMSEKNGGGSLTALPVIETQGGDVSAYIPTNVISITDGQIFLEAELFYKGIRPAINVGLSVSRVGSAAQVKALKQVAGSLKLFLAQYREVAAFAQFGSDLDASTKQTLARGERLTQLLKQNQYSPLAAEEQVPLIYAGVNGYLDNIDISRIAEFETKFLAYLKANHDEIVSAIREKGELSKELLATLKSATESFVATF</sequence>
<evidence type="ECO:0000250" key="1"/>
<evidence type="ECO:0000255" key="2"/>
<evidence type="ECO:0000305" key="3"/>
<accession>P49375</accession>
<comment type="function">
    <text evidence="1">Mitochondrial membrane ATP synthase (F(1)F(0) ATP synthase or Complex V) produces ATP from ADP in the presence of a proton gradient across the membrane which is generated by electron transport complexes of the respiratory chain. F-type ATPases consist of two structural domains, F(1) - containing the extramembraneous catalytic core, and F(0) - containing the membrane proton channel, linked together by a central stalk and a peripheral stalk. During catalysis, ATP synthesis in the catalytic domain of F(1) is coupled via a rotary mechanism of the central stalk subunits to proton translocation. Subunits alpha and beta form the catalytic core in F(1). Rotation of the central stalk against the surrounding alpha(3)beta(3) subunits leads to hydrolysis of ATP in three separate catalytic sites on the beta subunits. Subunit alpha does not bear the catalytic high-affinity ATP-binding sites (By similarity).</text>
</comment>
<comment type="subunit">
    <text>F-type ATPases have 2 components, CF(1) - the catalytic core - and CF(0) - the membrane proton channel. CF(1) has five subunits: alpha(3), beta(3), gamma(1), delta(1), epsilon(1). CF(0) has three main subunits: a, b and c.</text>
</comment>
<comment type="subcellular location">
    <subcellularLocation>
        <location>Mitochondrion</location>
    </subcellularLocation>
    <subcellularLocation>
        <location>Mitochondrion inner membrane</location>
    </subcellularLocation>
    <text>Peripheral membrane protein.</text>
</comment>
<comment type="similarity">
    <text evidence="3">Belongs to the ATPase alpha/beta chains family.</text>
</comment>
<dbReference type="EMBL" id="X79106">
    <property type="protein sequence ID" value="CAA55723.1"/>
    <property type="molecule type" value="Genomic_DNA"/>
</dbReference>
<dbReference type="EMBL" id="CR382125">
    <property type="protein sequence ID" value="CAG99335.1"/>
    <property type="molecule type" value="Genomic_DNA"/>
</dbReference>
<dbReference type="PIR" id="S56152">
    <property type="entry name" value="S56152"/>
</dbReference>
<dbReference type="RefSeq" id="XP_454248.1">
    <property type="nucleotide sequence ID" value="XM_454248.1"/>
</dbReference>
<dbReference type="SMR" id="P49375"/>
<dbReference type="FunCoup" id="P49375">
    <property type="interactions" value="1140"/>
</dbReference>
<dbReference type="STRING" id="284590.P49375"/>
<dbReference type="PaxDb" id="284590-P49375"/>
<dbReference type="KEGG" id="kla:KLLA0_E06667g"/>
<dbReference type="eggNOG" id="KOG1353">
    <property type="taxonomic scope" value="Eukaryota"/>
</dbReference>
<dbReference type="HOGENOM" id="CLU_010091_2_0_1"/>
<dbReference type="InParanoid" id="P49375"/>
<dbReference type="OMA" id="INQRDNW"/>
<dbReference type="Proteomes" id="UP000000598">
    <property type="component" value="Chromosome E"/>
</dbReference>
<dbReference type="GO" id="GO:0005743">
    <property type="term" value="C:mitochondrial inner membrane"/>
    <property type="evidence" value="ECO:0007669"/>
    <property type="project" value="UniProtKB-SubCell"/>
</dbReference>
<dbReference type="GO" id="GO:0045259">
    <property type="term" value="C:proton-transporting ATP synthase complex"/>
    <property type="evidence" value="ECO:0007669"/>
    <property type="project" value="UniProtKB-KW"/>
</dbReference>
<dbReference type="GO" id="GO:0043531">
    <property type="term" value="F:ADP binding"/>
    <property type="evidence" value="ECO:0007669"/>
    <property type="project" value="TreeGrafter"/>
</dbReference>
<dbReference type="GO" id="GO:0005524">
    <property type="term" value="F:ATP binding"/>
    <property type="evidence" value="ECO:0007669"/>
    <property type="project" value="UniProtKB-KW"/>
</dbReference>
<dbReference type="GO" id="GO:0046933">
    <property type="term" value="F:proton-transporting ATP synthase activity, rotational mechanism"/>
    <property type="evidence" value="ECO:0007669"/>
    <property type="project" value="InterPro"/>
</dbReference>
<dbReference type="CDD" id="cd18113">
    <property type="entry name" value="ATP-synt_F1_alpha_C"/>
    <property type="match status" value="1"/>
</dbReference>
<dbReference type="CDD" id="cd18116">
    <property type="entry name" value="ATP-synt_F1_alpha_N"/>
    <property type="match status" value="1"/>
</dbReference>
<dbReference type="CDD" id="cd01132">
    <property type="entry name" value="F1-ATPase_alpha_CD"/>
    <property type="match status" value="1"/>
</dbReference>
<dbReference type="FunFam" id="1.20.150.20:FF:000001">
    <property type="entry name" value="ATP synthase subunit alpha"/>
    <property type="match status" value="1"/>
</dbReference>
<dbReference type="FunFam" id="2.40.30.20:FF:000001">
    <property type="entry name" value="ATP synthase subunit alpha"/>
    <property type="match status" value="1"/>
</dbReference>
<dbReference type="FunFam" id="3.40.50.300:FF:004039">
    <property type="entry name" value="ATP synthase subunit alpha, mitochondrial"/>
    <property type="match status" value="1"/>
</dbReference>
<dbReference type="Gene3D" id="2.40.30.20">
    <property type="match status" value="1"/>
</dbReference>
<dbReference type="Gene3D" id="1.20.150.20">
    <property type="entry name" value="ATP synthase alpha/beta chain, C-terminal domain"/>
    <property type="match status" value="1"/>
</dbReference>
<dbReference type="Gene3D" id="3.40.50.300">
    <property type="entry name" value="P-loop containing nucleotide triphosphate hydrolases"/>
    <property type="match status" value="1"/>
</dbReference>
<dbReference type="HAMAP" id="MF_01346">
    <property type="entry name" value="ATP_synth_alpha_bact"/>
    <property type="match status" value="1"/>
</dbReference>
<dbReference type="InterPro" id="IPR023366">
    <property type="entry name" value="ATP_synth_asu-like_sf"/>
</dbReference>
<dbReference type="InterPro" id="IPR000793">
    <property type="entry name" value="ATP_synth_asu_C"/>
</dbReference>
<dbReference type="InterPro" id="IPR038376">
    <property type="entry name" value="ATP_synth_asu_C_sf"/>
</dbReference>
<dbReference type="InterPro" id="IPR033732">
    <property type="entry name" value="ATP_synth_F1_a_nt-bd_dom"/>
</dbReference>
<dbReference type="InterPro" id="IPR005294">
    <property type="entry name" value="ATP_synth_F1_asu"/>
</dbReference>
<dbReference type="InterPro" id="IPR020003">
    <property type="entry name" value="ATPase_a/bsu_AS"/>
</dbReference>
<dbReference type="InterPro" id="IPR004100">
    <property type="entry name" value="ATPase_F1/V1/A1_a/bsu_N"/>
</dbReference>
<dbReference type="InterPro" id="IPR036121">
    <property type="entry name" value="ATPase_F1/V1/A1_a/bsu_N_sf"/>
</dbReference>
<dbReference type="InterPro" id="IPR000194">
    <property type="entry name" value="ATPase_F1/V1/A1_a/bsu_nucl-bd"/>
</dbReference>
<dbReference type="InterPro" id="IPR027417">
    <property type="entry name" value="P-loop_NTPase"/>
</dbReference>
<dbReference type="NCBIfam" id="TIGR00962">
    <property type="entry name" value="atpA"/>
    <property type="match status" value="1"/>
</dbReference>
<dbReference type="NCBIfam" id="NF009884">
    <property type="entry name" value="PRK13343.1"/>
    <property type="match status" value="1"/>
</dbReference>
<dbReference type="PANTHER" id="PTHR48082">
    <property type="entry name" value="ATP SYNTHASE SUBUNIT ALPHA, MITOCHONDRIAL"/>
    <property type="match status" value="1"/>
</dbReference>
<dbReference type="PANTHER" id="PTHR48082:SF2">
    <property type="entry name" value="ATP SYNTHASE SUBUNIT ALPHA, MITOCHONDRIAL"/>
    <property type="match status" value="1"/>
</dbReference>
<dbReference type="Pfam" id="PF00006">
    <property type="entry name" value="ATP-synt_ab"/>
    <property type="match status" value="1"/>
</dbReference>
<dbReference type="Pfam" id="PF00306">
    <property type="entry name" value="ATP-synt_ab_C"/>
    <property type="match status" value="1"/>
</dbReference>
<dbReference type="Pfam" id="PF02874">
    <property type="entry name" value="ATP-synt_ab_N"/>
    <property type="match status" value="1"/>
</dbReference>
<dbReference type="PIRSF" id="PIRSF039088">
    <property type="entry name" value="F_ATPase_subunit_alpha"/>
    <property type="match status" value="1"/>
</dbReference>
<dbReference type="SUPFAM" id="SSF47917">
    <property type="entry name" value="C-terminal domain of alpha and beta subunits of F1 ATP synthase"/>
    <property type="match status" value="1"/>
</dbReference>
<dbReference type="SUPFAM" id="SSF50615">
    <property type="entry name" value="N-terminal domain of alpha and beta subunits of F1 ATP synthase"/>
    <property type="match status" value="1"/>
</dbReference>
<dbReference type="SUPFAM" id="SSF52540">
    <property type="entry name" value="P-loop containing nucleoside triphosphate hydrolases"/>
    <property type="match status" value="1"/>
</dbReference>
<dbReference type="PROSITE" id="PS00152">
    <property type="entry name" value="ATPASE_ALPHA_BETA"/>
    <property type="match status" value="1"/>
</dbReference>
<keyword id="KW-0066">ATP synthesis</keyword>
<keyword id="KW-0067">ATP-binding</keyword>
<keyword id="KW-0139">CF(1)</keyword>
<keyword id="KW-0375">Hydrogen ion transport</keyword>
<keyword id="KW-0406">Ion transport</keyword>
<keyword id="KW-0472">Membrane</keyword>
<keyword id="KW-0496">Mitochondrion</keyword>
<keyword id="KW-0999">Mitochondrion inner membrane</keyword>
<keyword id="KW-0547">Nucleotide-binding</keyword>
<keyword id="KW-1185">Reference proteome</keyword>
<keyword id="KW-0809">Transit peptide</keyword>
<keyword id="KW-0813">Transport</keyword>
<proteinExistence type="evidence at protein level"/>
<name>ATPA_KLULA</name>
<feature type="transit peptide" description="Mitochondrion" evidence="2">
    <location>
        <begin position="1"/>
        <end status="unknown"/>
    </location>
</feature>
<feature type="chain" id="PRO_0000002430" description="ATP synthase subunit alpha, mitochondrial">
    <location>
        <begin status="unknown"/>
        <end position="548"/>
    </location>
</feature>
<feature type="binding site" evidence="2">
    <location>
        <begin position="209"/>
        <end position="216"/>
    </location>
    <ligand>
        <name>ATP</name>
        <dbReference type="ChEBI" id="CHEBI:30616"/>
    </ligand>
</feature>
<feature type="site" description="Required for activity" evidence="1">
    <location>
        <position position="410"/>
    </location>
</feature>
<feature type="mutagenesis site" description="In MGI2-1; converts K.lactis into a petite-positive form.">
    <original>A</original>
    <variation>V</variation>
    <location>
        <position position="333"/>
    </location>
</feature>
<feature type="mutagenesis site" description="In MGI2-2; converts K.lactis into a petite-positive form.">
    <original>F</original>
    <variation>S</variation>
    <location>
        <position position="443"/>
    </location>
</feature>